<keyword id="KW-0520">NAD</keyword>
<keyword id="KW-0560">Oxidoreductase</keyword>
<keyword id="KW-0816">Tricarboxylic acid cycle</keyword>
<proteinExistence type="inferred from homology"/>
<dbReference type="EC" id="1.1.1.37" evidence="1"/>
<dbReference type="EMBL" id="CR543861">
    <property type="protein sequence ID" value="CAG69844.1"/>
    <property type="molecule type" value="Genomic_DNA"/>
</dbReference>
<dbReference type="RefSeq" id="WP_004924271.1">
    <property type="nucleotide sequence ID" value="NC_005966.1"/>
</dbReference>
<dbReference type="SMR" id="Q6F7X1"/>
<dbReference type="STRING" id="202950.GCA_001485005_02999"/>
<dbReference type="GeneID" id="45235372"/>
<dbReference type="KEGG" id="aci:ACIAD3155"/>
<dbReference type="eggNOG" id="COG0039">
    <property type="taxonomic scope" value="Bacteria"/>
</dbReference>
<dbReference type="HOGENOM" id="CLU_040727_2_0_6"/>
<dbReference type="OrthoDB" id="9802969at2"/>
<dbReference type="BioCyc" id="ASP62977:ACIAD_RS14285-MONOMER"/>
<dbReference type="Proteomes" id="UP000000430">
    <property type="component" value="Chromosome"/>
</dbReference>
<dbReference type="GO" id="GO:0030060">
    <property type="term" value="F:L-malate dehydrogenase (NAD+) activity"/>
    <property type="evidence" value="ECO:0007669"/>
    <property type="project" value="UniProtKB-UniRule"/>
</dbReference>
<dbReference type="GO" id="GO:0006108">
    <property type="term" value="P:malate metabolic process"/>
    <property type="evidence" value="ECO:0007669"/>
    <property type="project" value="InterPro"/>
</dbReference>
<dbReference type="GO" id="GO:0006099">
    <property type="term" value="P:tricarboxylic acid cycle"/>
    <property type="evidence" value="ECO:0007669"/>
    <property type="project" value="UniProtKB-UniRule"/>
</dbReference>
<dbReference type="CDD" id="cd01338">
    <property type="entry name" value="MDH_chloroplast-like"/>
    <property type="match status" value="1"/>
</dbReference>
<dbReference type="FunFam" id="3.40.50.720:FF:000010">
    <property type="entry name" value="Malate dehydrogenase"/>
    <property type="match status" value="1"/>
</dbReference>
<dbReference type="FunFam" id="3.90.110.10:FF:000002">
    <property type="entry name" value="Malate dehydrogenase"/>
    <property type="match status" value="1"/>
</dbReference>
<dbReference type="Gene3D" id="3.90.110.10">
    <property type="entry name" value="Lactate dehydrogenase/glycoside hydrolase, family 4, C-terminal"/>
    <property type="match status" value="1"/>
</dbReference>
<dbReference type="Gene3D" id="3.40.50.720">
    <property type="entry name" value="NAD(P)-binding Rossmann-like Domain"/>
    <property type="match status" value="1"/>
</dbReference>
<dbReference type="HAMAP" id="MF_01517">
    <property type="entry name" value="Malate_dehydrog_2"/>
    <property type="match status" value="1"/>
</dbReference>
<dbReference type="InterPro" id="IPR001557">
    <property type="entry name" value="L-lactate/malate_DH"/>
</dbReference>
<dbReference type="InterPro" id="IPR022383">
    <property type="entry name" value="Lactate/malate_DH_C"/>
</dbReference>
<dbReference type="InterPro" id="IPR001236">
    <property type="entry name" value="Lactate/malate_DH_N"/>
</dbReference>
<dbReference type="InterPro" id="IPR015955">
    <property type="entry name" value="Lactate_DH/Glyco_Ohase_4_C"/>
</dbReference>
<dbReference type="InterPro" id="IPR010945">
    <property type="entry name" value="Malate_DH_type2"/>
</dbReference>
<dbReference type="InterPro" id="IPR036291">
    <property type="entry name" value="NAD(P)-bd_dom_sf"/>
</dbReference>
<dbReference type="NCBIfam" id="TIGR01759">
    <property type="entry name" value="MalateDH-SF1"/>
    <property type="match status" value="1"/>
</dbReference>
<dbReference type="NCBIfam" id="NF003916">
    <property type="entry name" value="PRK05442.1"/>
    <property type="match status" value="1"/>
</dbReference>
<dbReference type="PANTHER" id="PTHR23382">
    <property type="entry name" value="MALATE DEHYDROGENASE"/>
    <property type="match status" value="1"/>
</dbReference>
<dbReference type="Pfam" id="PF02866">
    <property type="entry name" value="Ldh_1_C"/>
    <property type="match status" value="1"/>
</dbReference>
<dbReference type="Pfam" id="PF00056">
    <property type="entry name" value="Ldh_1_N"/>
    <property type="match status" value="1"/>
</dbReference>
<dbReference type="PIRSF" id="PIRSF000102">
    <property type="entry name" value="Lac_mal_DH"/>
    <property type="match status" value="1"/>
</dbReference>
<dbReference type="SUPFAM" id="SSF56327">
    <property type="entry name" value="LDH C-terminal domain-like"/>
    <property type="match status" value="1"/>
</dbReference>
<dbReference type="SUPFAM" id="SSF51735">
    <property type="entry name" value="NAD(P)-binding Rossmann-fold domains"/>
    <property type="match status" value="1"/>
</dbReference>
<feature type="chain" id="PRO_0000113343" description="Malate dehydrogenase">
    <location>
        <begin position="1"/>
        <end position="328"/>
    </location>
</feature>
<feature type="active site" description="Proton acceptor" evidence="1">
    <location>
        <position position="189"/>
    </location>
</feature>
<feature type="binding site" evidence="1">
    <location>
        <begin position="11"/>
        <end position="17"/>
    </location>
    <ligand>
        <name>NAD(+)</name>
        <dbReference type="ChEBI" id="CHEBI:57540"/>
    </ligand>
</feature>
<feature type="binding site" evidence="1">
    <location>
        <position position="94"/>
    </location>
    <ligand>
        <name>substrate</name>
    </ligand>
</feature>
<feature type="binding site" evidence="1">
    <location>
        <position position="100"/>
    </location>
    <ligand>
        <name>substrate</name>
    </ligand>
</feature>
<feature type="binding site" evidence="1">
    <location>
        <position position="107"/>
    </location>
    <ligand>
        <name>NAD(+)</name>
        <dbReference type="ChEBI" id="CHEBI:57540"/>
    </ligand>
</feature>
<feature type="binding site" evidence="1">
    <location>
        <position position="114"/>
    </location>
    <ligand>
        <name>NAD(+)</name>
        <dbReference type="ChEBI" id="CHEBI:57540"/>
    </ligand>
</feature>
<feature type="binding site" evidence="1">
    <location>
        <begin position="131"/>
        <end position="133"/>
    </location>
    <ligand>
        <name>NAD(+)</name>
        <dbReference type="ChEBI" id="CHEBI:57540"/>
    </ligand>
</feature>
<feature type="binding site" evidence="1">
    <location>
        <position position="133"/>
    </location>
    <ligand>
        <name>substrate</name>
    </ligand>
</feature>
<feature type="binding site" evidence="1">
    <location>
        <position position="164"/>
    </location>
    <ligand>
        <name>substrate</name>
    </ligand>
</feature>
<gene>
    <name evidence="1" type="primary">mdh</name>
    <name type="ordered locus">ACIAD3155</name>
</gene>
<organism>
    <name type="scientific">Acinetobacter baylyi (strain ATCC 33305 / BD413 / ADP1)</name>
    <dbReference type="NCBI Taxonomy" id="62977"/>
    <lineage>
        <taxon>Bacteria</taxon>
        <taxon>Pseudomonadati</taxon>
        <taxon>Pseudomonadota</taxon>
        <taxon>Gammaproteobacteria</taxon>
        <taxon>Moraxellales</taxon>
        <taxon>Moraxellaceae</taxon>
        <taxon>Acinetobacter</taxon>
    </lineage>
</organism>
<protein>
    <recommendedName>
        <fullName evidence="1">Malate dehydrogenase</fullName>
        <ecNumber evidence="1">1.1.1.37</ecNumber>
    </recommendedName>
</protein>
<comment type="function">
    <text evidence="1">Catalyzes the reversible oxidation of malate to oxaloacetate.</text>
</comment>
<comment type="catalytic activity">
    <reaction evidence="1">
        <text>(S)-malate + NAD(+) = oxaloacetate + NADH + H(+)</text>
        <dbReference type="Rhea" id="RHEA:21432"/>
        <dbReference type="ChEBI" id="CHEBI:15378"/>
        <dbReference type="ChEBI" id="CHEBI:15589"/>
        <dbReference type="ChEBI" id="CHEBI:16452"/>
        <dbReference type="ChEBI" id="CHEBI:57540"/>
        <dbReference type="ChEBI" id="CHEBI:57945"/>
        <dbReference type="EC" id="1.1.1.37"/>
    </reaction>
</comment>
<comment type="similarity">
    <text evidence="1">Belongs to the LDH/MDH superfamily. MDH type 2 family.</text>
</comment>
<name>MDH_ACIAD</name>
<reference key="1">
    <citation type="journal article" date="2004" name="Nucleic Acids Res.">
        <title>Unique features revealed by the genome sequence of Acinetobacter sp. ADP1, a versatile and naturally transformation competent bacterium.</title>
        <authorList>
            <person name="Barbe V."/>
            <person name="Vallenet D."/>
            <person name="Fonknechten N."/>
            <person name="Kreimeyer A."/>
            <person name="Oztas S."/>
            <person name="Labarre L."/>
            <person name="Cruveiller S."/>
            <person name="Robert C."/>
            <person name="Duprat S."/>
            <person name="Wincker P."/>
            <person name="Ornston L.N."/>
            <person name="Weissenbach J."/>
            <person name="Marliere P."/>
            <person name="Cohen G.N."/>
            <person name="Medigue C."/>
        </authorList>
    </citation>
    <scope>NUCLEOTIDE SEQUENCE [LARGE SCALE GENOMIC DNA]</scope>
    <source>
        <strain>ATCC 33305 / BD413 / ADP1</strain>
    </source>
</reference>
<evidence type="ECO:0000255" key="1">
    <source>
        <dbReference type="HAMAP-Rule" id="MF_01517"/>
    </source>
</evidence>
<accession>Q6F7X1</accession>
<sequence length="328" mass="35449">MKQPVRVAVTGAAGQIGYSLLFRIASGEMLGKDQPVILQLLEIPVEKAQQALKGVMMELDDCAFPLLAGMIGTDDPKVAFKDADYALLVGSRPRGPGMERADLLKVNGEIFIGQGQALNEVASRDVKVLVVGNPANTNAYIAMKSAPDLPAKNFTAMLRLDHNRALTQIAQKAGVAVADIEKLTVWGNHSPTMYADYRFATANGENLKDKINDAEWNKDVFLPTVGKRGAAIIEARGLSSAASAANAAIDHMRDWALGTNGKWVTMGIPSDGSYGIPEGVIYGVPVTCENGEYKRVEGLEIDEFSRERMDKTLQELEEERAAIADMLK</sequence>